<gene>
    <name evidence="1" type="primary">lpxK</name>
    <name type="ordered locus">Jann_0399</name>
</gene>
<evidence type="ECO:0000255" key="1">
    <source>
        <dbReference type="HAMAP-Rule" id="MF_00409"/>
    </source>
</evidence>
<organism>
    <name type="scientific">Jannaschia sp. (strain CCS1)</name>
    <dbReference type="NCBI Taxonomy" id="290400"/>
    <lineage>
        <taxon>Bacteria</taxon>
        <taxon>Pseudomonadati</taxon>
        <taxon>Pseudomonadota</taxon>
        <taxon>Alphaproteobacteria</taxon>
        <taxon>Rhodobacterales</taxon>
        <taxon>Roseobacteraceae</taxon>
        <taxon>Jannaschia</taxon>
    </lineage>
</organism>
<proteinExistence type="inferred from homology"/>
<sequence length="328" mass="34805">MRAPGFWHEPAGVASTLLAPLGALYAAGTARRLRTGPRVRVDVPVICIGNINAGGTGKTPTAIALAQRLLAKGVKVHAVTRGYGGEVEGPLCVEERTHTAKQVGDEALLLSAFLPTWVSTDRQAGARAAVADGAECLILDDGFQNPALAYDLSIVVVDAWRGFGNGRVIPAGPLREPVEIGLKRADIVLSIGPDAAQQRFATTWGRHIAVPHLTGTLQPLPTGLPLDGLPVLAFAGIGHPEKFFQTLRSLGADLHATHALADHQPLTDTLMIRLLRDASMRGAQVVTTEKDAVRLSPEFRAQVMTVPVRLEVDDWGPLDSAVDKVLGR</sequence>
<feature type="chain" id="PRO_0000291212" description="Tetraacyldisaccharide 4'-kinase">
    <location>
        <begin position="1"/>
        <end position="328"/>
    </location>
</feature>
<feature type="binding site" evidence="1">
    <location>
        <begin position="52"/>
        <end position="59"/>
    </location>
    <ligand>
        <name>ATP</name>
        <dbReference type="ChEBI" id="CHEBI:30616"/>
    </ligand>
</feature>
<accession>Q28VE6</accession>
<dbReference type="EC" id="2.7.1.130" evidence="1"/>
<dbReference type="EMBL" id="CP000264">
    <property type="protein sequence ID" value="ABD53316.1"/>
    <property type="molecule type" value="Genomic_DNA"/>
</dbReference>
<dbReference type="RefSeq" id="WP_011453525.1">
    <property type="nucleotide sequence ID" value="NC_007802.1"/>
</dbReference>
<dbReference type="SMR" id="Q28VE6"/>
<dbReference type="STRING" id="290400.Jann_0399"/>
<dbReference type="KEGG" id="jan:Jann_0399"/>
<dbReference type="eggNOG" id="COG1663">
    <property type="taxonomic scope" value="Bacteria"/>
</dbReference>
<dbReference type="HOGENOM" id="CLU_038816_0_0_5"/>
<dbReference type="OrthoDB" id="9766423at2"/>
<dbReference type="UniPathway" id="UPA00359">
    <property type="reaction ID" value="UER00482"/>
</dbReference>
<dbReference type="Proteomes" id="UP000008326">
    <property type="component" value="Chromosome"/>
</dbReference>
<dbReference type="GO" id="GO:0005886">
    <property type="term" value="C:plasma membrane"/>
    <property type="evidence" value="ECO:0007669"/>
    <property type="project" value="TreeGrafter"/>
</dbReference>
<dbReference type="GO" id="GO:0005524">
    <property type="term" value="F:ATP binding"/>
    <property type="evidence" value="ECO:0007669"/>
    <property type="project" value="UniProtKB-UniRule"/>
</dbReference>
<dbReference type="GO" id="GO:0009029">
    <property type="term" value="F:tetraacyldisaccharide 4'-kinase activity"/>
    <property type="evidence" value="ECO:0007669"/>
    <property type="project" value="UniProtKB-UniRule"/>
</dbReference>
<dbReference type="GO" id="GO:0009245">
    <property type="term" value="P:lipid A biosynthetic process"/>
    <property type="evidence" value="ECO:0007669"/>
    <property type="project" value="UniProtKB-UniRule"/>
</dbReference>
<dbReference type="GO" id="GO:0009244">
    <property type="term" value="P:lipopolysaccharide core region biosynthetic process"/>
    <property type="evidence" value="ECO:0007669"/>
    <property type="project" value="TreeGrafter"/>
</dbReference>
<dbReference type="HAMAP" id="MF_00409">
    <property type="entry name" value="LpxK"/>
    <property type="match status" value="1"/>
</dbReference>
<dbReference type="InterPro" id="IPR003758">
    <property type="entry name" value="LpxK"/>
</dbReference>
<dbReference type="InterPro" id="IPR027417">
    <property type="entry name" value="P-loop_NTPase"/>
</dbReference>
<dbReference type="NCBIfam" id="TIGR00682">
    <property type="entry name" value="lpxK"/>
    <property type="match status" value="1"/>
</dbReference>
<dbReference type="PANTHER" id="PTHR42724">
    <property type="entry name" value="TETRAACYLDISACCHARIDE 4'-KINASE"/>
    <property type="match status" value="1"/>
</dbReference>
<dbReference type="PANTHER" id="PTHR42724:SF1">
    <property type="entry name" value="TETRAACYLDISACCHARIDE 4'-KINASE, MITOCHONDRIAL-RELATED"/>
    <property type="match status" value="1"/>
</dbReference>
<dbReference type="Pfam" id="PF02606">
    <property type="entry name" value="LpxK"/>
    <property type="match status" value="1"/>
</dbReference>
<dbReference type="SUPFAM" id="SSF52540">
    <property type="entry name" value="P-loop containing nucleoside triphosphate hydrolases"/>
    <property type="match status" value="1"/>
</dbReference>
<name>LPXK_JANSC</name>
<keyword id="KW-0067">ATP-binding</keyword>
<keyword id="KW-0418">Kinase</keyword>
<keyword id="KW-0441">Lipid A biosynthesis</keyword>
<keyword id="KW-0444">Lipid biosynthesis</keyword>
<keyword id="KW-0443">Lipid metabolism</keyword>
<keyword id="KW-0547">Nucleotide-binding</keyword>
<keyword id="KW-1185">Reference proteome</keyword>
<keyword id="KW-0808">Transferase</keyword>
<reference key="1">
    <citation type="submission" date="2006-02" db="EMBL/GenBank/DDBJ databases">
        <title>Complete sequence of chromosome of Jannaschia sp. CCS1.</title>
        <authorList>
            <consortium name="US DOE Joint Genome Institute"/>
            <person name="Copeland A."/>
            <person name="Lucas S."/>
            <person name="Lapidus A."/>
            <person name="Barry K."/>
            <person name="Detter J.C."/>
            <person name="Glavina del Rio T."/>
            <person name="Hammon N."/>
            <person name="Israni S."/>
            <person name="Pitluck S."/>
            <person name="Brettin T."/>
            <person name="Bruce D."/>
            <person name="Han C."/>
            <person name="Tapia R."/>
            <person name="Gilna P."/>
            <person name="Chertkov O."/>
            <person name="Saunders E."/>
            <person name="Schmutz J."/>
            <person name="Larimer F."/>
            <person name="Land M."/>
            <person name="Kyrpides N."/>
            <person name="Lykidis A."/>
            <person name="Moran M.A."/>
            <person name="Belas R."/>
            <person name="Ye W."/>
            <person name="Buchan A."/>
            <person name="Gonzalez J.M."/>
            <person name="Schell M.A."/>
            <person name="Richardson P."/>
        </authorList>
    </citation>
    <scope>NUCLEOTIDE SEQUENCE [LARGE SCALE GENOMIC DNA]</scope>
    <source>
        <strain>CCS1</strain>
    </source>
</reference>
<comment type="function">
    <text evidence="1">Transfers the gamma-phosphate of ATP to the 4'-position of a tetraacyldisaccharide 1-phosphate intermediate (termed DS-1-P) to form tetraacyldisaccharide 1,4'-bis-phosphate (lipid IVA).</text>
</comment>
<comment type="catalytic activity">
    <reaction evidence="1">
        <text>a lipid A disaccharide + ATP = a lipid IVA + ADP + H(+)</text>
        <dbReference type="Rhea" id="RHEA:67840"/>
        <dbReference type="ChEBI" id="CHEBI:15378"/>
        <dbReference type="ChEBI" id="CHEBI:30616"/>
        <dbReference type="ChEBI" id="CHEBI:176343"/>
        <dbReference type="ChEBI" id="CHEBI:176425"/>
        <dbReference type="ChEBI" id="CHEBI:456216"/>
        <dbReference type="EC" id="2.7.1.130"/>
    </reaction>
</comment>
<comment type="pathway">
    <text evidence="1">Glycolipid biosynthesis; lipid IV(A) biosynthesis; lipid IV(A) from (3R)-3-hydroxytetradecanoyl-[acyl-carrier-protein] and UDP-N-acetyl-alpha-D-glucosamine: step 6/6.</text>
</comment>
<comment type="similarity">
    <text evidence="1">Belongs to the LpxK family.</text>
</comment>
<protein>
    <recommendedName>
        <fullName evidence="1">Tetraacyldisaccharide 4'-kinase</fullName>
        <ecNumber evidence="1">2.7.1.130</ecNumber>
    </recommendedName>
    <alternativeName>
        <fullName evidence="1">Lipid A 4'-kinase</fullName>
    </alternativeName>
</protein>